<accession>A9N773</accession>
<name>RAPZ_SALPB</name>
<proteinExistence type="inferred from homology"/>
<sequence>MVLMIVSGRSGSGKSVALRALEDMGFYCVDNLPVVLLPDLARTLADRQISAAVSIDVRNMPESPEIFEQAMNNLPGAFSPQLLFLDADRNTLIRRYSDTRRLHPLSSKNLSLESAIDKESDLLEPLRSRADLIVDTSEMSVHELAEMLRTRLLGKRERELTMVFESFGFKHGIPIDADYVFDVRFLPNPHWDPKLRPMTGLDKPVAAFLDRHTEVHNFIYQTRSYLELWLPMLETNNRSYLTVAIGCTGGKHRSVYIAEQLADYFRSRGKNVQSRHRTLEKRKT</sequence>
<protein>
    <recommendedName>
        <fullName evidence="1">RNase adapter protein RapZ</fullName>
    </recommendedName>
</protein>
<keyword id="KW-0067">ATP-binding</keyword>
<keyword id="KW-0342">GTP-binding</keyword>
<keyword id="KW-0547">Nucleotide-binding</keyword>
<keyword id="KW-0694">RNA-binding</keyword>
<reference key="1">
    <citation type="submission" date="2007-11" db="EMBL/GenBank/DDBJ databases">
        <authorList>
            <consortium name="The Salmonella enterica serovar Paratyphi B Genome Sequencing Project"/>
            <person name="McClelland M."/>
            <person name="Sanderson E.K."/>
            <person name="Porwollik S."/>
            <person name="Spieth J."/>
            <person name="Clifton W.S."/>
            <person name="Fulton R."/>
            <person name="Cordes M."/>
            <person name="Wollam A."/>
            <person name="Shah N."/>
            <person name="Pepin K."/>
            <person name="Bhonagiri V."/>
            <person name="Nash W."/>
            <person name="Johnson M."/>
            <person name="Thiruvilangam P."/>
            <person name="Wilson R."/>
        </authorList>
    </citation>
    <scope>NUCLEOTIDE SEQUENCE [LARGE SCALE GENOMIC DNA]</scope>
    <source>
        <strain>ATCC BAA-1250 / SPB7</strain>
    </source>
</reference>
<gene>
    <name evidence="1" type="primary">rapZ</name>
    <name type="ordered locus">SPAB_04141</name>
</gene>
<comment type="function">
    <text evidence="1">Modulates the synthesis of GlmS, by affecting the processing and stability of the regulatory small RNA GlmZ. When glucosamine-6-phosphate (GlcN6P) concentrations are high in the cell, RapZ binds GlmZ and targets it to cleavage by RNase E. Consequently, GlmZ is inactivated and unable to activate GlmS synthesis. Under low GlcN6P concentrations, RapZ is sequestered and inactivated by an other regulatory small RNA, GlmY, preventing GlmZ degradation and leading to synthesis of GlmS.</text>
</comment>
<comment type="subunit">
    <text evidence="1">Homotrimer.</text>
</comment>
<comment type="similarity">
    <text evidence="1">Belongs to the RapZ-like family. RapZ subfamily.</text>
</comment>
<evidence type="ECO:0000255" key="1">
    <source>
        <dbReference type="HAMAP-Rule" id="MF_00636"/>
    </source>
</evidence>
<dbReference type="EMBL" id="CP000886">
    <property type="protein sequence ID" value="ABX69465.1"/>
    <property type="molecule type" value="Genomic_DNA"/>
</dbReference>
<dbReference type="RefSeq" id="WP_000243749.1">
    <property type="nucleotide sequence ID" value="NC_010102.1"/>
</dbReference>
<dbReference type="SMR" id="A9N773"/>
<dbReference type="KEGG" id="spq:SPAB_04141"/>
<dbReference type="PATRIC" id="fig|1016998.12.peg.3901"/>
<dbReference type="HOGENOM" id="CLU_059558_1_1_6"/>
<dbReference type="BioCyc" id="SENT1016998:SPAB_RS16840-MONOMER"/>
<dbReference type="Proteomes" id="UP000008556">
    <property type="component" value="Chromosome"/>
</dbReference>
<dbReference type="GO" id="GO:0005524">
    <property type="term" value="F:ATP binding"/>
    <property type="evidence" value="ECO:0007669"/>
    <property type="project" value="UniProtKB-UniRule"/>
</dbReference>
<dbReference type="GO" id="GO:0005525">
    <property type="term" value="F:GTP binding"/>
    <property type="evidence" value="ECO:0007669"/>
    <property type="project" value="UniProtKB-UniRule"/>
</dbReference>
<dbReference type="GO" id="GO:0003723">
    <property type="term" value="F:RNA binding"/>
    <property type="evidence" value="ECO:0007669"/>
    <property type="project" value="UniProtKB-KW"/>
</dbReference>
<dbReference type="Gene3D" id="3.40.50.300">
    <property type="entry name" value="P-loop containing nucleotide triphosphate hydrolases"/>
    <property type="match status" value="1"/>
</dbReference>
<dbReference type="HAMAP" id="MF_00636">
    <property type="entry name" value="RapZ_like"/>
    <property type="match status" value="1"/>
</dbReference>
<dbReference type="InterPro" id="IPR027417">
    <property type="entry name" value="P-loop_NTPase"/>
</dbReference>
<dbReference type="InterPro" id="IPR005337">
    <property type="entry name" value="RapZ-like"/>
</dbReference>
<dbReference type="InterPro" id="IPR053930">
    <property type="entry name" value="RapZ-like_N"/>
</dbReference>
<dbReference type="InterPro" id="IPR053931">
    <property type="entry name" value="RapZ_C"/>
</dbReference>
<dbReference type="NCBIfam" id="NF003828">
    <property type="entry name" value="PRK05416.1"/>
    <property type="match status" value="1"/>
</dbReference>
<dbReference type="PANTHER" id="PTHR30448">
    <property type="entry name" value="RNASE ADAPTER PROTEIN RAPZ"/>
    <property type="match status" value="1"/>
</dbReference>
<dbReference type="PANTHER" id="PTHR30448:SF0">
    <property type="entry name" value="RNASE ADAPTER PROTEIN RAPZ"/>
    <property type="match status" value="1"/>
</dbReference>
<dbReference type="Pfam" id="PF22740">
    <property type="entry name" value="PapZ_C"/>
    <property type="match status" value="1"/>
</dbReference>
<dbReference type="Pfam" id="PF03668">
    <property type="entry name" value="RapZ-like_N"/>
    <property type="match status" value="1"/>
</dbReference>
<dbReference type="PIRSF" id="PIRSF005052">
    <property type="entry name" value="P-loopkin"/>
    <property type="match status" value="1"/>
</dbReference>
<dbReference type="SUPFAM" id="SSF52540">
    <property type="entry name" value="P-loop containing nucleoside triphosphate hydrolases"/>
    <property type="match status" value="1"/>
</dbReference>
<feature type="chain" id="PRO_1000082663" description="RNase adapter protein RapZ">
    <location>
        <begin position="1"/>
        <end position="284"/>
    </location>
</feature>
<feature type="region of interest" description="RNA-binding" evidence="1">
    <location>
        <begin position="266"/>
        <end position="284"/>
    </location>
</feature>
<feature type="binding site" evidence="1">
    <location>
        <begin position="8"/>
        <end position="15"/>
    </location>
    <ligand>
        <name>ATP</name>
        <dbReference type="ChEBI" id="CHEBI:30616"/>
    </ligand>
</feature>
<feature type="binding site" evidence="1">
    <location>
        <begin position="56"/>
        <end position="59"/>
    </location>
    <ligand>
        <name>GTP</name>
        <dbReference type="ChEBI" id="CHEBI:37565"/>
    </ligand>
</feature>
<organism>
    <name type="scientific">Salmonella paratyphi B (strain ATCC BAA-1250 / SPB7)</name>
    <dbReference type="NCBI Taxonomy" id="1016998"/>
    <lineage>
        <taxon>Bacteria</taxon>
        <taxon>Pseudomonadati</taxon>
        <taxon>Pseudomonadota</taxon>
        <taxon>Gammaproteobacteria</taxon>
        <taxon>Enterobacterales</taxon>
        <taxon>Enterobacteriaceae</taxon>
        <taxon>Salmonella</taxon>
    </lineage>
</organism>